<gene>
    <name evidence="1" type="primary">fusA2</name>
    <name type="ordered locus">GSU2860</name>
</gene>
<reference key="1">
    <citation type="journal article" date="2003" name="Science">
        <title>Genome of Geobacter sulfurreducens: metal reduction in subsurface environments.</title>
        <authorList>
            <person name="Methe B.A."/>
            <person name="Nelson K.E."/>
            <person name="Eisen J.A."/>
            <person name="Paulsen I.T."/>
            <person name="Nelson W.C."/>
            <person name="Heidelberg J.F."/>
            <person name="Wu D."/>
            <person name="Wu M."/>
            <person name="Ward N.L."/>
            <person name="Beanan M.J."/>
            <person name="Dodson R.J."/>
            <person name="Madupu R."/>
            <person name="Brinkac L.M."/>
            <person name="Daugherty S.C."/>
            <person name="DeBoy R.T."/>
            <person name="Durkin A.S."/>
            <person name="Gwinn M.L."/>
            <person name="Kolonay J.F."/>
            <person name="Sullivan S.A."/>
            <person name="Haft D.H."/>
            <person name="Selengut J."/>
            <person name="Davidsen T.M."/>
            <person name="Zafar N."/>
            <person name="White O."/>
            <person name="Tran B."/>
            <person name="Romero C."/>
            <person name="Forberger H.A."/>
            <person name="Weidman J.F."/>
            <person name="Khouri H.M."/>
            <person name="Feldblyum T.V."/>
            <person name="Utterback T.R."/>
            <person name="Van Aken S.E."/>
            <person name="Lovley D.R."/>
            <person name="Fraser C.M."/>
        </authorList>
    </citation>
    <scope>NUCLEOTIDE SEQUENCE [LARGE SCALE GENOMIC DNA]</scope>
    <source>
        <strain>ATCC 51573 / DSM 12127 / PCA</strain>
    </source>
</reference>
<keyword id="KW-0963">Cytoplasm</keyword>
<keyword id="KW-0251">Elongation factor</keyword>
<keyword id="KW-0342">GTP-binding</keyword>
<keyword id="KW-0547">Nucleotide-binding</keyword>
<keyword id="KW-0648">Protein biosynthesis</keyword>
<keyword id="KW-1185">Reference proteome</keyword>
<feature type="chain" id="PRO_0000091128" description="Elongation factor G 2">
    <location>
        <begin position="1"/>
        <end position="692"/>
    </location>
</feature>
<feature type="domain" description="tr-type G">
    <location>
        <begin position="8"/>
        <end position="283"/>
    </location>
</feature>
<feature type="binding site" evidence="1">
    <location>
        <begin position="17"/>
        <end position="24"/>
    </location>
    <ligand>
        <name>GTP</name>
        <dbReference type="ChEBI" id="CHEBI:37565"/>
    </ligand>
</feature>
<feature type="binding site" evidence="1">
    <location>
        <begin position="81"/>
        <end position="85"/>
    </location>
    <ligand>
        <name>GTP</name>
        <dbReference type="ChEBI" id="CHEBI:37565"/>
    </ligand>
</feature>
<feature type="binding site" evidence="1">
    <location>
        <begin position="135"/>
        <end position="138"/>
    </location>
    <ligand>
        <name>GTP</name>
        <dbReference type="ChEBI" id="CHEBI:37565"/>
    </ligand>
</feature>
<protein>
    <recommendedName>
        <fullName evidence="1">Elongation factor G 2</fullName>
        <shortName evidence="1">EF-G 2</shortName>
    </recommendedName>
</protein>
<evidence type="ECO:0000255" key="1">
    <source>
        <dbReference type="HAMAP-Rule" id="MF_00054"/>
    </source>
</evidence>
<comment type="function">
    <text evidence="1">Catalyzes the GTP-dependent ribosomal translocation step during translation elongation. During this step, the ribosome changes from the pre-translocational (PRE) to the post-translocational (POST) state as the newly formed A-site-bound peptidyl-tRNA and P-site-bound deacylated tRNA move to the P and E sites, respectively. Catalyzes the coordinated movement of the two tRNA molecules, the mRNA and conformational changes in the ribosome.</text>
</comment>
<comment type="subcellular location">
    <subcellularLocation>
        <location evidence="1">Cytoplasm</location>
    </subcellularLocation>
</comment>
<comment type="similarity">
    <text evidence="1">Belongs to the TRAFAC class translation factor GTPase superfamily. Classic translation factor GTPase family. EF-G/EF-2 subfamily.</text>
</comment>
<proteinExistence type="inferred from homology"/>
<dbReference type="EMBL" id="AE017180">
    <property type="protein sequence ID" value="AAR36253.1"/>
    <property type="molecule type" value="Genomic_DNA"/>
</dbReference>
<dbReference type="RefSeq" id="NP_953903.1">
    <property type="nucleotide sequence ID" value="NC_002939.5"/>
</dbReference>
<dbReference type="SMR" id="Q748Y8"/>
<dbReference type="FunCoup" id="Q748Y8">
    <property type="interactions" value="614"/>
</dbReference>
<dbReference type="STRING" id="243231.GSU2860"/>
<dbReference type="EnsemblBacteria" id="AAR36253">
    <property type="protein sequence ID" value="AAR36253"/>
    <property type="gene ID" value="GSU2860"/>
</dbReference>
<dbReference type="KEGG" id="gsu:GSU2860"/>
<dbReference type="PATRIC" id="fig|243231.5.peg.2886"/>
<dbReference type="eggNOG" id="COG0480">
    <property type="taxonomic scope" value="Bacteria"/>
</dbReference>
<dbReference type="HOGENOM" id="CLU_002794_4_1_7"/>
<dbReference type="InParanoid" id="Q748Y8"/>
<dbReference type="OrthoDB" id="9801591at2"/>
<dbReference type="Proteomes" id="UP000000577">
    <property type="component" value="Chromosome"/>
</dbReference>
<dbReference type="GO" id="GO:0005737">
    <property type="term" value="C:cytoplasm"/>
    <property type="evidence" value="ECO:0007669"/>
    <property type="project" value="UniProtKB-SubCell"/>
</dbReference>
<dbReference type="GO" id="GO:0005525">
    <property type="term" value="F:GTP binding"/>
    <property type="evidence" value="ECO:0007669"/>
    <property type="project" value="UniProtKB-UniRule"/>
</dbReference>
<dbReference type="GO" id="GO:0003924">
    <property type="term" value="F:GTPase activity"/>
    <property type="evidence" value="ECO:0007669"/>
    <property type="project" value="InterPro"/>
</dbReference>
<dbReference type="GO" id="GO:0003746">
    <property type="term" value="F:translation elongation factor activity"/>
    <property type="evidence" value="ECO:0007669"/>
    <property type="project" value="UniProtKB-UniRule"/>
</dbReference>
<dbReference type="GO" id="GO:0032790">
    <property type="term" value="P:ribosome disassembly"/>
    <property type="evidence" value="ECO:0000318"/>
    <property type="project" value="GO_Central"/>
</dbReference>
<dbReference type="CDD" id="cd01886">
    <property type="entry name" value="EF-G"/>
    <property type="match status" value="1"/>
</dbReference>
<dbReference type="CDD" id="cd16262">
    <property type="entry name" value="EFG_III"/>
    <property type="match status" value="1"/>
</dbReference>
<dbReference type="CDD" id="cd01434">
    <property type="entry name" value="EFG_mtEFG1_IV"/>
    <property type="match status" value="1"/>
</dbReference>
<dbReference type="CDD" id="cd03713">
    <property type="entry name" value="EFG_mtEFG_C"/>
    <property type="match status" value="1"/>
</dbReference>
<dbReference type="CDD" id="cd04088">
    <property type="entry name" value="EFG_mtEFG_II"/>
    <property type="match status" value="1"/>
</dbReference>
<dbReference type="FunFam" id="2.40.30.10:FF:000006">
    <property type="entry name" value="Elongation factor G"/>
    <property type="match status" value="1"/>
</dbReference>
<dbReference type="FunFam" id="3.30.230.10:FF:000003">
    <property type="entry name" value="Elongation factor G"/>
    <property type="match status" value="1"/>
</dbReference>
<dbReference type="FunFam" id="3.30.70.240:FF:000001">
    <property type="entry name" value="Elongation factor G"/>
    <property type="match status" value="1"/>
</dbReference>
<dbReference type="FunFam" id="3.30.70.870:FF:000001">
    <property type="entry name" value="Elongation factor G"/>
    <property type="match status" value="1"/>
</dbReference>
<dbReference type="FunFam" id="3.40.50.300:FF:000029">
    <property type="entry name" value="Elongation factor G"/>
    <property type="match status" value="1"/>
</dbReference>
<dbReference type="Gene3D" id="3.30.230.10">
    <property type="match status" value="1"/>
</dbReference>
<dbReference type="Gene3D" id="3.30.70.240">
    <property type="match status" value="1"/>
</dbReference>
<dbReference type="Gene3D" id="3.30.70.870">
    <property type="entry name" value="Elongation Factor G (Translational Gtpase), domain 3"/>
    <property type="match status" value="1"/>
</dbReference>
<dbReference type="Gene3D" id="3.40.50.300">
    <property type="entry name" value="P-loop containing nucleotide triphosphate hydrolases"/>
    <property type="match status" value="1"/>
</dbReference>
<dbReference type="Gene3D" id="2.40.30.10">
    <property type="entry name" value="Translation factors"/>
    <property type="match status" value="1"/>
</dbReference>
<dbReference type="HAMAP" id="MF_00054_B">
    <property type="entry name" value="EF_G_EF_2_B"/>
    <property type="match status" value="1"/>
</dbReference>
<dbReference type="InterPro" id="IPR041095">
    <property type="entry name" value="EFG_II"/>
</dbReference>
<dbReference type="InterPro" id="IPR009022">
    <property type="entry name" value="EFG_III"/>
</dbReference>
<dbReference type="InterPro" id="IPR035647">
    <property type="entry name" value="EFG_III/V"/>
</dbReference>
<dbReference type="InterPro" id="IPR047872">
    <property type="entry name" value="EFG_IV"/>
</dbReference>
<dbReference type="InterPro" id="IPR035649">
    <property type="entry name" value="EFG_V"/>
</dbReference>
<dbReference type="InterPro" id="IPR000640">
    <property type="entry name" value="EFG_V-like"/>
</dbReference>
<dbReference type="InterPro" id="IPR004161">
    <property type="entry name" value="EFTu-like_2"/>
</dbReference>
<dbReference type="InterPro" id="IPR031157">
    <property type="entry name" value="G_TR_CS"/>
</dbReference>
<dbReference type="InterPro" id="IPR027417">
    <property type="entry name" value="P-loop_NTPase"/>
</dbReference>
<dbReference type="InterPro" id="IPR020568">
    <property type="entry name" value="Ribosomal_Su5_D2-typ_SF"/>
</dbReference>
<dbReference type="InterPro" id="IPR014721">
    <property type="entry name" value="Ribsml_uS5_D2-typ_fold_subgr"/>
</dbReference>
<dbReference type="InterPro" id="IPR005225">
    <property type="entry name" value="Small_GTP-bd"/>
</dbReference>
<dbReference type="InterPro" id="IPR000795">
    <property type="entry name" value="T_Tr_GTP-bd_dom"/>
</dbReference>
<dbReference type="InterPro" id="IPR009000">
    <property type="entry name" value="Transl_B-barrel_sf"/>
</dbReference>
<dbReference type="InterPro" id="IPR004540">
    <property type="entry name" value="Transl_elong_EFG/EF2"/>
</dbReference>
<dbReference type="InterPro" id="IPR005517">
    <property type="entry name" value="Transl_elong_EFG/EF2_IV"/>
</dbReference>
<dbReference type="NCBIfam" id="TIGR00484">
    <property type="entry name" value="EF-G"/>
    <property type="match status" value="1"/>
</dbReference>
<dbReference type="NCBIfam" id="NF009379">
    <property type="entry name" value="PRK12740.1-3"/>
    <property type="match status" value="1"/>
</dbReference>
<dbReference type="NCBIfam" id="NF009381">
    <property type="entry name" value="PRK12740.1-5"/>
    <property type="match status" value="1"/>
</dbReference>
<dbReference type="NCBIfam" id="TIGR00231">
    <property type="entry name" value="small_GTP"/>
    <property type="match status" value="1"/>
</dbReference>
<dbReference type="PANTHER" id="PTHR43261:SF1">
    <property type="entry name" value="RIBOSOME-RELEASING FACTOR 2, MITOCHONDRIAL"/>
    <property type="match status" value="1"/>
</dbReference>
<dbReference type="PANTHER" id="PTHR43261">
    <property type="entry name" value="TRANSLATION ELONGATION FACTOR G-RELATED"/>
    <property type="match status" value="1"/>
</dbReference>
<dbReference type="Pfam" id="PF00679">
    <property type="entry name" value="EFG_C"/>
    <property type="match status" value="1"/>
</dbReference>
<dbReference type="Pfam" id="PF14492">
    <property type="entry name" value="EFG_III"/>
    <property type="match status" value="1"/>
</dbReference>
<dbReference type="Pfam" id="PF03764">
    <property type="entry name" value="EFG_IV"/>
    <property type="match status" value="1"/>
</dbReference>
<dbReference type="Pfam" id="PF00009">
    <property type="entry name" value="GTP_EFTU"/>
    <property type="match status" value="1"/>
</dbReference>
<dbReference type="Pfam" id="PF03144">
    <property type="entry name" value="GTP_EFTU_D2"/>
    <property type="match status" value="1"/>
</dbReference>
<dbReference type="PRINTS" id="PR00315">
    <property type="entry name" value="ELONGATNFCT"/>
</dbReference>
<dbReference type="SMART" id="SM00838">
    <property type="entry name" value="EFG_C"/>
    <property type="match status" value="1"/>
</dbReference>
<dbReference type="SMART" id="SM00889">
    <property type="entry name" value="EFG_IV"/>
    <property type="match status" value="1"/>
</dbReference>
<dbReference type="SUPFAM" id="SSF54980">
    <property type="entry name" value="EF-G C-terminal domain-like"/>
    <property type="match status" value="2"/>
</dbReference>
<dbReference type="SUPFAM" id="SSF52540">
    <property type="entry name" value="P-loop containing nucleoside triphosphate hydrolases"/>
    <property type="match status" value="1"/>
</dbReference>
<dbReference type="SUPFAM" id="SSF54211">
    <property type="entry name" value="Ribosomal protein S5 domain 2-like"/>
    <property type="match status" value="1"/>
</dbReference>
<dbReference type="SUPFAM" id="SSF50447">
    <property type="entry name" value="Translation proteins"/>
    <property type="match status" value="1"/>
</dbReference>
<dbReference type="PROSITE" id="PS00301">
    <property type="entry name" value="G_TR_1"/>
    <property type="match status" value="1"/>
</dbReference>
<dbReference type="PROSITE" id="PS51722">
    <property type="entry name" value="G_TR_2"/>
    <property type="match status" value="1"/>
</dbReference>
<sequence length="692" mass="76201">MARQVSLEKTRNIGIMAHIDAGKTTTTERILYYTGVTHKIGEVHEGAATMDWMEQEQERGITITSAATTCFWGDHRVNIIDTPGHVDFTIEVERSLRVLDGAVAVFCSVGGVEPQSETVWRQADKYRVPRIAFINKMDRVGADFFRGVGMIRDRLKANPVPIQLPIGAEDTYRGVVDLVEMKAIIWDEESLGAKYHEAEIPADLAEMAQEYREKLIEEIATFDDALMEKYLGGEELTTDEIKAAVRKATIDIQICPVICGSAFKNKGVQNLLDSVVAYLPSPLDIPAITGIDAKSGEEITRKASDDEPFSALAFKIMTDPFVGQLCFFRVYSGVLNSGSYVYNSTKEKKERIGRLLKMHANKREEIKEVYAGDIAAAVGLKYTTTGDTLCPEDSPVVLESIEFPEPVIAIAIEPKTKADQEKLGISLQKLASEDPSFRVRTDEETGQTIISGMGELHLEIIVDRLMREFKVEANVGKPQVAYRETVTKKVKVEGKFVRQSGGRGQYGHVWIELEPQEAGKGYEFVDAIKGGVVPREYIPAVDKGIQEAMETGVLAGYPTVDFKVALVDGSYHEVDSSEMAFKIAGSMAFKEAAAKAGPVLLEPIMSVEVVVPEEYMGDVIGDLNSRRGRIMGMEGRAGAQVVSAMVPLAQMFGYATDLRSATQGRATYTMTFDHYEQVPKSVSEEIVAKVKG</sequence>
<name>EFG2_GEOSL</name>
<accession>Q748Y8</accession>
<organism>
    <name type="scientific">Geobacter sulfurreducens (strain ATCC 51573 / DSM 12127 / PCA)</name>
    <dbReference type="NCBI Taxonomy" id="243231"/>
    <lineage>
        <taxon>Bacteria</taxon>
        <taxon>Pseudomonadati</taxon>
        <taxon>Thermodesulfobacteriota</taxon>
        <taxon>Desulfuromonadia</taxon>
        <taxon>Geobacterales</taxon>
        <taxon>Geobacteraceae</taxon>
        <taxon>Geobacter</taxon>
    </lineage>
</organism>